<keyword id="KW-0143">Chaperone</keyword>
<keyword id="KW-0614">Plasmid</keyword>
<keyword id="KW-0843">Virulence</keyword>
<organism>
    <name type="scientific">Shigella sonnei</name>
    <dbReference type="NCBI Taxonomy" id="624"/>
    <lineage>
        <taxon>Bacteria</taxon>
        <taxon>Pseudomonadati</taxon>
        <taxon>Pseudomonadota</taxon>
        <taxon>Gammaproteobacteria</taxon>
        <taxon>Enterobacterales</taxon>
        <taxon>Enterobacteriaceae</taxon>
        <taxon>Shigella</taxon>
    </lineage>
</organism>
<sequence length="133" mass="15188">MSNINLVQLVRDSLFTIGCPPSIITDLDSHSAITISLDSMPAINIALVNEQVMLWANFDAPSDVKLQSSAYNILNLMLMNFSYSINELVELHRSDEYLQLRVVIKDDYVHDGIVFAEILHEFYQRMEILNEVL</sequence>
<feature type="chain" id="PRO_0000180967" description="Surface presentation of antigens protein SpaK">
    <location>
        <begin position="1"/>
        <end position="133"/>
    </location>
</feature>
<geneLocation type="plasmid">
    <name>pINV</name>
</geneLocation>
<proteinExistence type="inferred from homology"/>
<comment type="function">
    <text>Required for surface presentation of invasion plasmid antigens. Chaperone specialized in the storage of effectors within the bacterial cytoplasm, maintaining them in a secretion-competent state, and allowing their immediate delivery to target cells upon contact of the bacterium with the host cells.</text>
</comment>
<comment type="subunit">
    <text evidence="1">Homodimer.</text>
</comment>
<comment type="similarity">
    <text evidence="2">Belongs to the SpaK family.</text>
</comment>
<dbReference type="EMBL" id="D50601">
    <property type="protein sequence ID" value="BAA09157.1"/>
    <property type="molecule type" value="Genomic_DNA"/>
</dbReference>
<dbReference type="RefSeq" id="WP_000065501.1">
    <property type="nucleotide sequence ID" value="NZ_UIQD01000016.1"/>
</dbReference>
<dbReference type="SMR" id="Q55296"/>
<dbReference type="STRING" id="216599.GCA_000283715_05239"/>
<dbReference type="OMA" id="TIMEGCQ"/>
<dbReference type="CDD" id="cd17035">
    <property type="entry name" value="T3SC_IB_Spa15-like"/>
    <property type="match status" value="1"/>
</dbReference>
<dbReference type="Gene3D" id="3.30.1460.10">
    <property type="match status" value="1"/>
</dbReference>
<dbReference type="InterPro" id="IPR003065">
    <property type="entry name" value="Invas_SpaK"/>
</dbReference>
<dbReference type="Pfam" id="PF03519">
    <property type="entry name" value="Invas_SpaK"/>
    <property type="match status" value="1"/>
</dbReference>
<dbReference type="PRINTS" id="PR01305">
    <property type="entry name" value="SSPAKPROTEIN"/>
</dbReference>
<dbReference type="SUPFAM" id="SSF69635">
    <property type="entry name" value="Type III secretory system chaperone-like"/>
    <property type="match status" value="1"/>
</dbReference>
<reference key="1">
    <citation type="submission" date="1995-05" db="EMBL/GenBank/DDBJ databases">
        <title>Comparison and high conservation of nucleotide sequences of spa-mxi regions between S.sonnei and S.flexneri -- identification of a new gene coding plausible membrane protein.</title>
        <authorList>
            <person name="Arakawa E."/>
            <person name="Kato J."/>
            <person name="Ito K."/>
            <person name="Watanabe H."/>
        </authorList>
    </citation>
    <scope>NUCLEOTIDE SEQUENCE [GENOMIC DNA]</scope>
    <source>
        <strain>HW383</strain>
    </source>
</reference>
<evidence type="ECO:0000250" key="1"/>
<evidence type="ECO:0000305" key="2"/>
<name>SPAK_SHISO</name>
<protein>
    <recommendedName>
        <fullName>Surface presentation of antigens protein SpaK</fullName>
    </recommendedName>
    <alternativeName>
        <fullName>Class 1B type III secretion system chaperone spa15</fullName>
    </alternativeName>
</protein>
<accession>Q55296</accession>
<gene>
    <name type="primary">spaK</name>
    <name type="synonym">spa15</name>
</gene>